<name>OMT11_LOPWI</name>
<accession>P0DXJ8</accession>
<gene>
    <name evidence="4" type="primary">OMT11</name>
</gene>
<feature type="chain" id="PRO_0000462562" description="O-methyltransferase 11">
    <location>
        <begin position="1"/>
        <end position="386"/>
    </location>
</feature>
<feature type="active site" description="Proton acceptor" evidence="2">
    <location>
        <position position="292"/>
    </location>
</feature>
<feature type="binding site" evidence="1">
    <location>
        <position position="207"/>
    </location>
    <ligand>
        <name>S-adenosyl-L-homocysteine</name>
        <dbReference type="ChEBI" id="CHEBI:57856"/>
    </ligand>
</feature>
<feature type="binding site" evidence="1">
    <location>
        <position position="231"/>
    </location>
    <ligand>
        <name>S-adenosyl-L-homocysteine</name>
        <dbReference type="ChEBI" id="CHEBI:57856"/>
    </ligand>
</feature>
<feature type="binding site" evidence="1">
    <location>
        <position position="254"/>
    </location>
    <ligand>
        <name>S-adenosyl-L-homocysteine</name>
        <dbReference type="ChEBI" id="CHEBI:57856"/>
    </ligand>
</feature>
<feature type="binding site" evidence="2">
    <location>
        <position position="254"/>
    </location>
    <ligand>
        <name>S-adenosyl-L-methionine</name>
        <dbReference type="ChEBI" id="CHEBI:59789"/>
    </ligand>
</feature>
<feature type="binding site" evidence="1">
    <location>
        <position position="274"/>
    </location>
    <ligand>
        <name>S-adenosyl-L-homocysteine</name>
        <dbReference type="ChEBI" id="CHEBI:57856"/>
    </ligand>
</feature>
<feature type="binding site" evidence="1">
    <location>
        <position position="288"/>
    </location>
    <ligand>
        <name>S-adenosyl-L-homocysteine</name>
        <dbReference type="ChEBI" id="CHEBI:57856"/>
    </ligand>
</feature>
<feature type="mutagenesis site" description="Reduced activity toward 3,4-dihydroxy-5-methoxyphenethylamine. Lost activity toward 3,4-dihydroxy-5-methoxyphenethylamine; when associated with A-293." evidence="3">
    <original>H</original>
    <variation>A</variation>
    <location>
        <position position="292"/>
    </location>
</feature>
<feature type="mutagenesis site" description="Impaired activity toward 3,4-dihydroxy-5-methoxyphenethylamine. Lost activity toward 3,4-dihydroxy-5-methoxyphenethylamine; when associated with A-292." evidence="3">
    <original>D</original>
    <variation>A</variation>
    <location>
        <position position="293"/>
    </location>
</feature>
<sequence length="386" mass="42482">MAEIPTSSNPSDDPETQKLNGNEEDYDHHHDEDPESDDENYEYALQIAEMLPFPMVMKTAIELDLLGIIATAGPDRQLSAAEIAAALPAAGNPDAPAMLDRMLYLLATYSVVTCTAVDGGASGGVVRKYGLAPVAKYFVSNEDGVSLGALISLNQGQAFLASWSKLKEAVLEGGIPFNKVHGMDVFHYQGTDPRFNEIFNKAMYDQSTYIIKKIVRRYKGFENIQRLVDVGGGLGHTLRVITSNYPSIKGINFDLPHVIQHAPTIPGVEHVGGDMFESIPNGDAIFMKCILHDWSDEHCLKILKNCYKALPRKGKVIVVEMNMIEEPQTTPLAKAISQLDVCMMTQSPGGKERTRREFQTLAEAAGFAEFNPVCHVAGFWVMEFLK</sequence>
<protein>
    <recommendedName>
        <fullName evidence="4">O-methyltransferase 11</fullName>
        <shortName evidence="4">LwOMT11</shortName>
        <ecNumber evidence="2 3">2.1.1.-</ecNumber>
    </recommendedName>
</protein>
<reference key="1">
    <citation type="journal article" date="2024" name="Mol. Plant">
        <title>The biosynthetic pathway of the hallucinogen mescaline and its heterologous reconstruction.</title>
        <authorList>
            <person name="Berman P."/>
            <person name="de Haro L.A."/>
            <person name="Cavaco A.-R."/>
            <person name="Panda S."/>
            <person name="Dong Y."/>
            <person name="Kuzmich N."/>
            <person name="Lichtenstein G."/>
            <person name="Peleg Y."/>
            <person name="Harat H."/>
            <person name="Jozwiak A."/>
            <person name="Cai J."/>
            <person name="Heinig U."/>
            <person name="Meir S."/>
            <person name="Rogachev I."/>
            <person name="Aharoni A."/>
        </authorList>
    </citation>
    <scope>NUCLEOTIDE SEQUENCE [MRNA]</scope>
    <scope>FUNCTION</scope>
    <scope>MUTAGENESIS OF HIS-292 AND ASP-293</scope>
    <scope>CATALYTIC ACTIVITY</scope>
    <scope>PATHWAY</scope>
    <scope>BIOTECHNOLOGY</scope>
    <source>
        <strain>cv. Rehovot 7</strain>
    </source>
</reference>
<comment type="function">
    <text evidence="3">O-methyltransferase participating in the biosynthesis of natural products derived from phenylethylamine, including mescaline, a natural hallucinogen potentially used in psychotherapeutic treatments (PubMed:38835170). Catalyzes the O-methylation of mescaline para hydroxyl groups, using dopamine, 3,4-dihydroxy-5-methoxyphenethylamine, 3-hydroxy-4,5-dimethoxyphenethylamine and 4-hydroxy-3,5-dimethoxyphenethylamine as substrates (PubMed:38835170).</text>
</comment>
<comment type="catalytic activity">
    <reaction evidence="3">
        <text>dopamine + S-adenosyl-L-methionine = 4-methoxytyramine + S-adenosyl-L-homocysteine + H(+)</text>
        <dbReference type="Rhea" id="RHEA:81047"/>
        <dbReference type="ChEBI" id="CHEBI:15378"/>
        <dbReference type="ChEBI" id="CHEBI:57856"/>
        <dbReference type="ChEBI" id="CHEBI:59789"/>
        <dbReference type="ChEBI" id="CHEBI:59905"/>
        <dbReference type="ChEBI" id="CHEBI:192993"/>
    </reaction>
    <physiologicalReaction direction="left-to-right" evidence="3">
        <dbReference type="Rhea" id="RHEA:81048"/>
    </physiologicalReaction>
</comment>
<comment type="catalytic activity">
    <reaction evidence="3">
        <text>3,4-dihydroxy-5-methoxyphenethylamine + S-adenosyl-L-methionine = 3-hydroxy-4,5-dimethoxyphenethylamine + S-adenosyl-L-homocysteine + H(+)</text>
        <dbReference type="Rhea" id="RHEA:81051"/>
        <dbReference type="ChEBI" id="CHEBI:15378"/>
        <dbReference type="ChEBI" id="CHEBI:57856"/>
        <dbReference type="ChEBI" id="CHEBI:59789"/>
        <dbReference type="ChEBI" id="CHEBI:231763"/>
        <dbReference type="ChEBI" id="CHEBI:231769"/>
    </reaction>
    <physiologicalReaction direction="left-to-right" evidence="3">
        <dbReference type="Rhea" id="RHEA:81052"/>
    </physiologicalReaction>
</comment>
<comment type="catalytic activity">
    <reaction evidence="3">
        <text>3-hydroxy-4,5-dimethoxyphenethylamine + S-adenosyl-L-methionine = mescaline + S-adenosyl-L-homocysteine + H(+)</text>
        <dbReference type="Rhea" id="RHEA:81055"/>
        <dbReference type="ChEBI" id="CHEBI:15378"/>
        <dbReference type="ChEBI" id="CHEBI:57856"/>
        <dbReference type="ChEBI" id="CHEBI:59789"/>
        <dbReference type="ChEBI" id="CHEBI:231762"/>
        <dbReference type="ChEBI" id="CHEBI:231769"/>
    </reaction>
    <physiologicalReaction direction="left-to-right" evidence="3">
        <dbReference type="Rhea" id="RHEA:81056"/>
    </physiologicalReaction>
</comment>
<comment type="catalytic activity">
    <reaction evidence="3">
        <text>4-hydroxy-3,5-dimethoxyphenethylamine + S-adenosyl-L-methionine = mescaline + S-adenosyl-L-homocysteine + H(+)</text>
        <dbReference type="Rhea" id="RHEA:81059"/>
        <dbReference type="ChEBI" id="CHEBI:15378"/>
        <dbReference type="ChEBI" id="CHEBI:57856"/>
        <dbReference type="ChEBI" id="CHEBI:59789"/>
        <dbReference type="ChEBI" id="CHEBI:231762"/>
        <dbReference type="ChEBI" id="CHEBI:231768"/>
    </reaction>
    <physiologicalReaction direction="left-to-right" evidence="3">
        <dbReference type="Rhea" id="RHEA:81060"/>
    </physiologicalReaction>
</comment>
<comment type="pathway">
    <text evidence="3">Aromatic compound metabolism.</text>
</comment>
<comment type="pathway">
    <text evidence="3">Alkaloid biosynthesis.</text>
</comment>
<comment type="subunit">
    <text evidence="1">Homodimer.</text>
</comment>
<comment type="biotechnology">
    <text evidence="3">An heterologous biosynthetic pathway of mescaline is reconstructed in Nicotiana benthamiana plants and yeast cells expressing Lophophora williamsii genes TyDC2, CYP76AD131, OMT1 and OMT11, thus providing a sustainable production of phenylethylamine-derivated natural products.</text>
</comment>
<comment type="similarity">
    <text evidence="2">Belongs to the class I-like SAM-binding methyltransferase superfamily. Cation-independent O-methyltransferase family.</text>
</comment>
<organism>
    <name type="scientific">Lophophora williamsii</name>
    <name type="common">Peyote</name>
    <name type="synonym">Echinocactus williamsii</name>
    <dbReference type="NCBI Taxonomy" id="130138"/>
    <lineage>
        <taxon>Eukaryota</taxon>
        <taxon>Viridiplantae</taxon>
        <taxon>Streptophyta</taxon>
        <taxon>Embryophyta</taxon>
        <taxon>Tracheophyta</taxon>
        <taxon>Spermatophyta</taxon>
        <taxon>Magnoliopsida</taxon>
        <taxon>eudicotyledons</taxon>
        <taxon>Gunneridae</taxon>
        <taxon>Pentapetalae</taxon>
        <taxon>Caryophyllales</taxon>
        <taxon>Cactineae</taxon>
        <taxon>Cactaceae</taxon>
        <taxon>Cactoideae</taxon>
        <taxon>Cacteae</taxon>
        <taxon>Lophophora</taxon>
    </lineage>
</organism>
<proteinExistence type="evidence at protein level"/>
<keyword id="KW-0017">Alkaloid metabolism</keyword>
<keyword id="KW-0489">Methyltransferase</keyword>
<keyword id="KW-0949">S-adenosyl-L-methionine</keyword>
<keyword id="KW-0808">Transferase</keyword>
<dbReference type="EC" id="2.1.1.-" evidence="2 3"/>
<dbReference type="PROSITE" id="PS51683">
    <property type="entry name" value="SAM_OMT_II"/>
    <property type="match status" value="1"/>
</dbReference>
<evidence type="ECO:0000250" key="1">
    <source>
        <dbReference type="UniProtKB" id="A0A166U5H3"/>
    </source>
</evidence>
<evidence type="ECO:0000255" key="2">
    <source>
        <dbReference type="PROSITE-ProRule" id="PRU01020"/>
    </source>
</evidence>
<evidence type="ECO:0000269" key="3">
    <source>
    </source>
</evidence>
<evidence type="ECO:0000303" key="4">
    <source>
    </source>
</evidence>